<comment type="function">
    <text evidence="1">The UvrABC repair system catalyzes the recognition and processing of DNA lesions. UvrC both incises the 5' and 3' sides of the lesion. The N-terminal half is responsible for the 3' incision and the C-terminal half is responsible for the 5' incision.</text>
</comment>
<comment type="subunit">
    <text evidence="1">Interacts with UvrB in an incision complex.</text>
</comment>
<comment type="subcellular location">
    <subcellularLocation>
        <location evidence="1">Cytoplasm</location>
    </subcellularLocation>
</comment>
<comment type="similarity">
    <text evidence="1">Belongs to the UvrC family.</text>
</comment>
<keyword id="KW-0963">Cytoplasm</keyword>
<keyword id="KW-0227">DNA damage</keyword>
<keyword id="KW-0228">DNA excision</keyword>
<keyword id="KW-0234">DNA repair</keyword>
<keyword id="KW-0267">Excision nuclease</keyword>
<keyword id="KW-0742">SOS response</keyword>
<dbReference type="EMBL" id="AP009044">
    <property type="protein sequence ID" value="BAF54632.1"/>
    <property type="molecule type" value="Genomic_DNA"/>
</dbReference>
<dbReference type="RefSeq" id="WP_011897303.1">
    <property type="nucleotide sequence ID" value="NC_009342.1"/>
</dbReference>
<dbReference type="SMR" id="A4QEG6"/>
<dbReference type="KEGG" id="cgt:cgR_1640"/>
<dbReference type="HOGENOM" id="CLU_014841_3_2_11"/>
<dbReference type="PhylomeDB" id="A4QEG6"/>
<dbReference type="Proteomes" id="UP000006698">
    <property type="component" value="Chromosome"/>
</dbReference>
<dbReference type="GO" id="GO:0005737">
    <property type="term" value="C:cytoplasm"/>
    <property type="evidence" value="ECO:0007669"/>
    <property type="project" value="UniProtKB-SubCell"/>
</dbReference>
<dbReference type="GO" id="GO:0009380">
    <property type="term" value="C:excinuclease repair complex"/>
    <property type="evidence" value="ECO:0007669"/>
    <property type="project" value="InterPro"/>
</dbReference>
<dbReference type="GO" id="GO:0003677">
    <property type="term" value="F:DNA binding"/>
    <property type="evidence" value="ECO:0007669"/>
    <property type="project" value="UniProtKB-UniRule"/>
</dbReference>
<dbReference type="GO" id="GO:0009381">
    <property type="term" value="F:excinuclease ABC activity"/>
    <property type="evidence" value="ECO:0007669"/>
    <property type="project" value="UniProtKB-UniRule"/>
</dbReference>
<dbReference type="GO" id="GO:0006289">
    <property type="term" value="P:nucleotide-excision repair"/>
    <property type="evidence" value="ECO:0007669"/>
    <property type="project" value="UniProtKB-UniRule"/>
</dbReference>
<dbReference type="GO" id="GO:0009432">
    <property type="term" value="P:SOS response"/>
    <property type="evidence" value="ECO:0007669"/>
    <property type="project" value="UniProtKB-UniRule"/>
</dbReference>
<dbReference type="CDD" id="cd10434">
    <property type="entry name" value="GIY-YIG_UvrC_Cho"/>
    <property type="match status" value="1"/>
</dbReference>
<dbReference type="FunFam" id="3.30.420.340:FF:000003">
    <property type="entry name" value="UvrABC system protein C"/>
    <property type="match status" value="1"/>
</dbReference>
<dbReference type="FunFam" id="3.40.1440.10:FF:000001">
    <property type="entry name" value="UvrABC system protein C"/>
    <property type="match status" value="1"/>
</dbReference>
<dbReference type="Gene3D" id="1.10.150.20">
    <property type="entry name" value="5' to 3' exonuclease, C-terminal subdomain"/>
    <property type="match status" value="1"/>
</dbReference>
<dbReference type="Gene3D" id="3.40.1440.10">
    <property type="entry name" value="GIY-YIG endonuclease"/>
    <property type="match status" value="1"/>
</dbReference>
<dbReference type="Gene3D" id="4.10.860.10">
    <property type="entry name" value="UVR domain"/>
    <property type="match status" value="1"/>
</dbReference>
<dbReference type="Gene3D" id="3.30.420.340">
    <property type="entry name" value="UvrC, RNAse H endonuclease domain"/>
    <property type="match status" value="1"/>
</dbReference>
<dbReference type="HAMAP" id="MF_00203">
    <property type="entry name" value="UvrC"/>
    <property type="match status" value="1"/>
</dbReference>
<dbReference type="InterPro" id="IPR000305">
    <property type="entry name" value="GIY-YIG_endonuc"/>
</dbReference>
<dbReference type="InterPro" id="IPR035901">
    <property type="entry name" value="GIY-YIG_endonuc_sf"/>
</dbReference>
<dbReference type="InterPro" id="IPR047296">
    <property type="entry name" value="GIY-YIG_UvrC_Cho"/>
</dbReference>
<dbReference type="InterPro" id="IPR003583">
    <property type="entry name" value="Hlx-hairpin-Hlx_DNA-bd_motif"/>
</dbReference>
<dbReference type="InterPro" id="IPR010994">
    <property type="entry name" value="RuvA_2-like"/>
</dbReference>
<dbReference type="InterPro" id="IPR001943">
    <property type="entry name" value="UVR_dom"/>
</dbReference>
<dbReference type="InterPro" id="IPR036876">
    <property type="entry name" value="UVR_dom_sf"/>
</dbReference>
<dbReference type="InterPro" id="IPR050066">
    <property type="entry name" value="UvrABC_protein_C"/>
</dbReference>
<dbReference type="InterPro" id="IPR004791">
    <property type="entry name" value="UvrC"/>
</dbReference>
<dbReference type="InterPro" id="IPR001162">
    <property type="entry name" value="UvrC_RNase_H_dom"/>
</dbReference>
<dbReference type="InterPro" id="IPR038476">
    <property type="entry name" value="UvrC_RNase_H_dom_sf"/>
</dbReference>
<dbReference type="NCBIfam" id="NF001824">
    <property type="entry name" value="PRK00558.1-5"/>
    <property type="match status" value="1"/>
</dbReference>
<dbReference type="NCBIfam" id="TIGR00194">
    <property type="entry name" value="uvrC"/>
    <property type="match status" value="1"/>
</dbReference>
<dbReference type="PANTHER" id="PTHR30562:SF1">
    <property type="entry name" value="UVRABC SYSTEM PROTEIN C"/>
    <property type="match status" value="1"/>
</dbReference>
<dbReference type="PANTHER" id="PTHR30562">
    <property type="entry name" value="UVRC/OXIDOREDUCTASE"/>
    <property type="match status" value="1"/>
</dbReference>
<dbReference type="Pfam" id="PF01541">
    <property type="entry name" value="GIY-YIG"/>
    <property type="match status" value="1"/>
</dbReference>
<dbReference type="Pfam" id="PF14520">
    <property type="entry name" value="HHH_5"/>
    <property type="match status" value="1"/>
</dbReference>
<dbReference type="Pfam" id="PF02151">
    <property type="entry name" value="UVR"/>
    <property type="match status" value="1"/>
</dbReference>
<dbReference type="Pfam" id="PF22920">
    <property type="entry name" value="UvrC_RNaseH"/>
    <property type="match status" value="1"/>
</dbReference>
<dbReference type="Pfam" id="PF08459">
    <property type="entry name" value="UvrC_RNaseH_dom"/>
    <property type="match status" value="1"/>
</dbReference>
<dbReference type="SMART" id="SM00465">
    <property type="entry name" value="GIYc"/>
    <property type="match status" value="1"/>
</dbReference>
<dbReference type="SMART" id="SM00278">
    <property type="entry name" value="HhH1"/>
    <property type="match status" value="2"/>
</dbReference>
<dbReference type="SUPFAM" id="SSF46600">
    <property type="entry name" value="C-terminal UvrC-binding domain of UvrB"/>
    <property type="match status" value="1"/>
</dbReference>
<dbReference type="SUPFAM" id="SSF82771">
    <property type="entry name" value="GIY-YIG endonuclease"/>
    <property type="match status" value="1"/>
</dbReference>
<dbReference type="SUPFAM" id="SSF47781">
    <property type="entry name" value="RuvA domain 2-like"/>
    <property type="match status" value="1"/>
</dbReference>
<dbReference type="PROSITE" id="PS50164">
    <property type="entry name" value="GIY_YIG"/>
    <property type="match status" value="1"/>
</dbReference>
<dbReference type="PROSITE" id="PS50151">
    <property type="entry name" value="UVR"/>
    <property type="match status" value="1"/>
</dbReference>
<dbReference type="PROSITE" id="PS50165">
    <property type="entry name" value="UVRC"/>
    <property type="match status" value="1"/>
</dbReference>
<accession>A4QEG6</accession>
<gene>
    <name evidence="1" type="primary">uvrC</name>
    <name type="ordered locus">cgR_1640</name>
</gene>
<proteinExistence type="inferred from homology"/>
<sequence length="696" mass="78334">MADPTTYRPAPGTIPTEPGVYKFRDENRRVIYVGKAKNLRSRLSNYFQDVTQLHPRTRQMVFAASSVEWTVVSSEVEALQLEYTWIKRFDPRFNVKYRDDKTYPMLAVSTGERFPRAFFFRGPRRKGVRYFGPYSHAWAVRETLDLLTRVFPMRTCSKGVFNRHESLGRPCLLGYIDKCAAPCVGRVSEEEHREIVDGFTSFMAGHTDKVTRKLNADMMAAAEELDFERAARLRDDLEAIDKVMEKQAVVLGDGTDADIIAFATDQLEAAVQVFNIRGGRIRGQRGWVVDKPGDYAGLLVDATTQPEGDAPETDPALPFLMQDFLVQFYGDAVERAETEAKEDAAVIERRGVDKHSFEEAAPVTRASVVPREILVQVAPNEAEQTLKVLEELRGAGVDARVPQRGDKRALMETVERNAKELLKQHKLKRVGDLTARSAALQELQEALDMEQAPLRIECTDISHIQGTDVVASLVVFEDGLPRKSDYRRYRVKEAAGDGHSNDVASIAEITRRRFLRHNQDKLAVPEAEEFDGSTFSDEKVEEMSTDARRFAYPPQIFIVDGGAPQVAAAQEVFDELGIVDVVLIGLAKRLEEIWLPGDPDPVILPRNSQALFLLQQIRDEAHRFAITYHRQQRSKRMRVSELDSIKGLGQSRRTELVKHFGSVAKLKEASVEDISQVKGFGPKLAEAVYEGLHASK</sequence>
<protein>
    <recommendedName>
        <fullName evidence="1">UvrABC system protein C</fullName>
        <shortName evidence="1">Protein UvrC</shortName>
    </recommendedName>
    <alternativeName>
        <fullName evidence="1">Excinuclease ABC subunit C</fullName>
    </alternativeName>
</protein>
<organism>
    <name type="scientific">Corynebacterium glutamicum (strain R)</name>
    <dbReference type="NCBI Taxonomy" id="340322"/>
    <lineage>
        <taxon>Bacteria</taxon>
        <taxon>Bacillati</taxon>
        <taxon>Actinomycetota</taxon>
        <taxon>Actinomycetes</taxon>
        <taxon>Mycobacteriales</taxon>
        <taxon>Corynebacteriaceae</taxon>
        <taxon>Corynebacterium</taxon>
    </lineage>
</organism>
<reference key="1">
    <citation type="journal article" date="2007" name="Microbiology">
        <title>Comparative analysis of the Corynebacterium glutamicum group and complete genome sequence of strain R.</title>
        <authorList>
            <person name="Yukawa H."/>
            <person name="Omumasaba C.A."/>
            <person name="Nonaka H."/>
            <person name="Kos P."/>
            <person name="Okai N."/>
            <person name="Suzuki N."/>
            <person name="Suda M."/>
            <person name="Tsuge Y."/>
            <person name="Watanabe J."/>
            <person name="Ikeda Y."/>
            <person name="Vertes A.A."/>
            <person name="Inui M."/>
        </authorList>
    </citation>
    <scope>NUCLEOTIDE SEQUENCE [LARGE SCALE GENOMIC DNA]</scope>
    <source>
        <strain>R</strain>
    </source>
</reference>
<feature type="chain" id="PRO_1000077776" description="UvrABC system protein C">
    <location>
        <begin position="1"/>
        <end position="696"/>
    </location>
</feature>
<feature type="domain" description="GIY-YIG" evidence="1">
    <location>
        <begin position="16"/>
        <end position="95"/>
    </location>
</feature>
<feature type="domain" description="UVR" evidence="1">
    <location>
        <begin position="208"/>
        <end position="243"/>
    </location>
</feature>
<name>UVRC_CORGB</name>
<evidence type="ECO:0000255" key="1">
    <source>
        <dbReference type="HAMAP-Rule" id="MF_00203"/>
    </source>
</evidence>